<name>NACA_YARLI</name>
<evidence type="ECO:0000250" key="1"/>
<evidence type="ECO:0000255" key="2">
    <source>
        <dbReference type="PROSITE-ProRule" id="PRU00507"/>
    </source>
</evidence>
<evidence type="ECO:0000305" key="3"/>
<protein>
    <recommendedName>
        <fullName>Nascent polypeptide-associated complex subunit alpha</fullName>
        <shortName>NAC-alpha</shortName>
    </recommendedName>
    <alternativeName>
        <fullName>Alpha-NAC</fullName>
    </alternativeName>
</protein>
<accession>Q6CDH0</accession>
<reference key="1">
    <citation type="journal article" date="2004" name="Nature">
        <title>Genome evolution in yeasts.</title>
        <authorList>
            <person name="Dujon B."/>
            <person name="Sherman D."/>
            <person name="Fischer G."/>
            <person name="Durrens P."/>
            <person name="Casaregola S."/>
            <person name="Lafontaine I."/>
            <person name="de Montigny J."/>
            <person name="Marck C."/>
            <person name="Neuveglise C."/>
            <person name="Talla E."/>
            <person name="Goffard N."/>
            <person name="Frangeul L."/>
            <person name="Aigle M."/>
            <person name="Anthouard V."/>
            <person name="Babour A."/>
            <person name="Barbe V."/>
            <person name="Barnay S."/>
            <person name="Blanchin S."/>
            <person name="Beckerich J.-M."/>
            <person name="Beyne E."/>
            <person name="Bleykasten C."/>
            <person name="Boisrame A."/>
            <person name="Boyer J."/>
            <person name="Cattolico L."/>
            <person name="Confanioleri F."/>
            <person name="de Daruvar A."/>
            <person name="Despons L."/>
            <person name="Fabre E."/>
            <person name="Fairhead C."/>
            <person name="Ferry-Dumazet H."/>
            <person name="Groppi A."/>
            <person name="Hantraye F."/>
            <person name="Hennequin C."/>
            <person name="Jauniaux N."/>
            <person name="Joyet P."/>
            <person name="Kachouri R."/>
            <person name="Kerrest A."/>
            <person name="Koszul R."/>
            <person name="Lemaire M."/>
            <person name="Lesur I."/>
            <person name="Ma L."/>
            <person name="Muller H."/>
            <person name="Nicaud J.-M."/>
            <person name="Nikolski M."/>
            <person name="Oztas S."/>
            <person name="Ozier-Kalogeropoulos O."/>
            <person name="Pellenz S."/>
            <person name="Potier S."/>
            <person name="Richard G.-F."/>
            <person name="Straub M.-L."/>
            <person name="Suleau A."/>
            <person name="Swennen D."/>
            <person name="Tekaia F."/>
            <person name="Wesolowski-Louvel M."/>
            <person name="Westhof E."/>
            <person name="Wirth B."/>
            <person name="Zeniou-Meyer M."/>
            <person name="Zivanovic Y."/>
            <person name="Bolotin-Fukuhara M."/>
            <person name="Thierry A."/>
            <person name="Bouchier C."/>
            <person name="Caudron B."/>
            <person name="Scarpelli C."/>
            <person name="Gaillardin C."/>
            <person name="Weissenbach J."/>
            <person name="Wincker P."/>
            <person name="Souciet J.-L."/>
        </authorList>
    </citation>
    <scope>NUCLEOTIDE SEQUENCE [LARGE SCALE GENOMIC DNA]</scope>
    <source>
        <strain>CLIB 122 / E 150</strain>
    </source>
</reference>
<organism>
    <name type="scientific">Yarrowia lipolytica (strain CLIB 122 / E 150)</name>
    <name type="common">Yeast</name>
    <name type="synonym">Candida lipolytica</name>
    <dbReference type="NCBI Taxonomy" id="284591"/>
    <lineage>
        <taxon>Eukaryota</taxon>
        <taxon>Fungi</taxon>
        <taxon>Dikarya</taxon>
        <taxon>Ascomycota</taxon>
        <taxon>Saccharomycotina</taxon>
        <taxon>Dipodascomycetes</taxon>
        <taxon>Dipodascales</taxon>
        <taxon>Dipodascales incertae sedis</taxon>
        <taxon>Yarrowia</taxon>
    </lineage>
</organism>
<proteinExistence type="inferred from homology"/>
<feature type="chain" id="PRO_0000273496" description="Nascent polypeptide-associated complex subunit alpha">
    <location>
        <begin position="1"/>
        <end position="198"/>
    </location>
</feature>
<feature type="domain" description="NAC-A/B" evidence="2">
    <location>
        <begin position="48"/>
        <end position="113"/>
    </location>
</feature>
<feature type="domain" description="UBA">
    <location>
        <begin position="159"/>
        <end position="198"/>
    </location>
</feature>
<dbReference type="EMBL" id="CR382129">
    <property type="protein sequence ID" value="CAG81587.1"/>
    <property type="molecule type" value="Genomic_DNA"/>
</dbReference>
<dbReference type="RefSeq" id="XP_501292.1">
    <property type="nucleotide sequence ID" value="XM_501292.1"/>
</dbReference>
<dbReference type="SMR" id="Q6CDH0"/>
<dbReference type="FunCoup" id="Q6CDH0">
    <property type="interactions" value="581"/>
</dbReference>
<dbReference type="STRING" id="284591.Q6CDH0"/>
<dbReference type="EnsemblFungi" id="CAG81587">
    <property type="protein sequence ID" value="CAG81587"/>
    <property type="gene ID" value="YALI0_C00605g"/>
</dbReference>
<dbReference type="VEuPathDB" id="FungiDB:YALI0_C00605g"/>
<dbReference type="HOGENOM" id="CLU_057806_2_0_1"/>
<dbReference type="InParanoid" id="Q6CDH0"/>
<dbReference type="OMA" id="SQKMIFA"/>
<dbReference type="OrthoDB" id="123937at4891"/>
<dbReference type="Proteomes" id="UP000001300">
    <property type="component" value="Chromosome C"/>
</dbReference>
<dbReference type="GO" id="GO:0005737">
    <property type="term" value="C:cytoplasm"/>
    <property type="evidence" value="ECO:0000318"/>
    <property type="project" value="GO_Central"/>
</dbReference>
<dbReference type="GO" id="GO:0005854">
    <property type="term" value="C:nascent polypeptide-associated complex"/>
    <property type="evidence" value="ECO:0007669"/>
    <property type="project" value="EnsemblFungi"/>
</dbReference>
<dbReference type="GO" id="GO:0005634">
    <property type="term" value="C:nucleus"/>
    <property type="evidence" value="ECO:0007669"/>
    <property type="project" value="UniProtKB-SubCell"/>
</dbReference>
<dbReference type="GO" id="GO:0070300">
    <property type="term" value="F:phosphatidic acid binding"/>
    <property type="evidence" value="ECO:0007669"/>
    <property type="project" value="EnsemblFungi"/>
</dbReference>
<dbReference type="GO" id="GO:0080025">
    <property type="term" value="F:phosphatidylinositol-3,5-bisphosphate binding"/>
    <property type="evidence" value="ECO:0007669"/>
    <property type="project" value="EnsemblFungi"/>
</dbReference>
<dbReference type="GO" id="GO:0032266">
    <property type="term" value="F:phosphatidylinositol-3-phosphate binding"/>
    <property type="evidence" value="ECO:0007669"/>
    <property type="project" value="EnsemblFungi"/>
</dbReference>
<dbReference type="GO" id="GO:0070273">
    <property type="term" value="F:phosphatidylinositol-4-phosphate binding"/>
    <property type="evidence" value="ECO:0007669"/>
    <property type="project" value="EnsemblFungi"/>
</dbReference>
<dbReference type="GO" id="GO:0051082">
    <property type="term" value="F:unfolded protein binding"/>
    <property type="evidence" value="ECO:0000318"/>
    <property type="project" value="GO_Central"/>
</dbReference>
<dbReference type="GO" id="GO:0006613">
    <property type="term" value="P:cotranslational protein targeting to membrane"/>
    <property type="evidence" value="ECO:0007669"/>
    <property type="project" value="EnsemblFungi"/>
</dbReference>
<dbReference type="GO" id="GO:0006612">
    <property type="term" value="P:protein targeting to membrane"/>
    <property type="evidence" value="ECO:0000318"/>
    <property type="project" value="GO_Central"/>
</dbReference>
<dbReference type="GO" id="GO:0015031">
    <property type="term" value="P:protein transport"/>
    <property type="evidence" value="ECO:0007669"/>
    <property type="project" value="UniProtKB-KW"/>
</dbReference>
<dbReference type="CDD" id="cd22054">
    <property type="entry name" value="NAC_NACA"/>
    <property type="match status" value="1"/>
</dbReference>
<dbReference type="CDD" id="cd14358">
    <property type="entry name" value="UBA_NAC_euk"/>
    <property type="match status" value="1"/>
</dbReference>
<dbReference type="Gene3D" id="1.10.8.10">
    <property type="entry name" value="DNA helicase RuvA subunit, C-terminal domain"/>
    <property type="match status" value="1"/>
</dbReference>
<dbReference type="Gene3D" id="2.20.70.30">
    <property type="entry name" value="Nascent polypeptide-associated complex domain"/>
    <property type="match status" value="1"/>
</dbReference>
<dbReference type="InterPro" id="IPR016641">
    <property type="entry name" value="EGD2/NACA0like"/>
</dbReference>
<dbReference type="InterPro" id="IPR044034">
    <property type="entry name" value="NAC-like_UBA"/>
</dbReference>
<dbReference type="InterPro" id="IPR038187">
    <property type="entry name" value="NAC_A/B_dom_sf"/>
</dbReference>
<dbReference type="InterPro" id="IPR002715">
    <property type="entry name" value="Nas_poly-pep-assoc_cplx_dom"/>
</dbReference>
<dbReference type="PANTHER" id="PTHR21713">
    <property type="entry name" value="NASCENT POLYPEPTIDE ASSOCIATED COMPLEX ALPHA SUBUNIT-RELATED"/>
    <property type="match status" value="1"/>
</dbReference>
<dbReference type="Pfam" id="PF01849">
    <property type="entry name" value="NAC"/>
    <property type="match status" value="1"/>
</dbReference>
<dbReference type="Pfam" id="PF19026">
    <property type="entry name" value="UBA_HYPK"/>
    <property type="match status" value="1"/>
</dbReference>
<dbReference type="PIRSF" id="PIRSF015901">
    <property type="entry name" value="NAC_alpha"/>
    <property type="match status" value="1"/>
</dbReference>
<dbReference type="SMART" id="SM01407">
    <property type="entry name" value="NAC"/>
    <property type="match status" value="1"/>
</dbReference>
<dbReference type="PROSITE" id="PS51151">
    <property type="entry name" value="NAC_AB"/>
    <property type="match status" value="1"/>
</dbReference>
<sequence length="198" mass="21168">MSAENKIEEITEDQVPQIEENSTIVIKKEEKAARALISKLNLQKVEGITRVVLKRTRQHIFVIANPEVYKTPTGNSYVVFGEAQHEDMQATARAAQIAAAQAQQAAAETGSVSEAAAAGEVGAELASKDPASITADLEAASLSKDEDAEDEAEADATGLEDSDIKLVMEQANVSRNKAINGLKKNDSDVVNTIMDLCK</sequence>
<gene>
    <name type="primary">EGD2</name>
    <name type="ordered locus">YALI0C00605g</name>
</gene>
<keyword id="KW-0963">Cytoplasm</keyword>
<keyword id="KW-0539">Nucleus</keyword>
<keyword id="KW-0653">Protein transport</keyword>
<keyword id="KW-1185">Reference proteome</keyword>
<keyword id="KW-0813">Transport</keyword>
<comment type="function">
    <text evidence="1">Component of the nascent polypeptide-associated complex (NAC), a dynamic component of the ribosomal exit tunnel, protecting the emerging polypeptides from interaction with other cytoplasmic proteins to ensure appropriate nascent protein targeting. The NAC complex also promotes mitochondrial protein import by enhancing productive ribosome interactions with the outer mitochondrial membrane and blocks the inappropriate interaction of ribosomes translating non-secretory nascent polypeptides with translocation sites in the membrane of the endoplasmic reticulum. EGD2 may also be involved in transcription regulation (By similarity).</text>
</comment>
<comment type="subunit">
    <text evidence="1">Part of the nascent polypeptide-associated complex (NAC), consisting of EGD2 and EGD1. NAC associates with ribosomes via EGD1 (By similarity).</text>
</comment>
<comment type="subcellular location">
    <subcellularLocation>
        <location evidence="1">Cytoplasm</location>
    </subcellularLocation>
    <subcellularLocation>
        <location evidence="1">Nucleus</location>
    </subcellularLocation>
    <text evidence="1">Predominantly cytoplasmic, may also transiently localize to the nucleus.</text>
</comment>
<comment type="similarity">
    <text evidence="3">Belongs to the NAC-alpha family.</text>
</comment>